<reference key="1">
    <citation type="journal article" date="1999" name="Nature">
        <title>Evidence for lateral gene transfer between Archaea and Bacteria from genome sequence of Thermotoga maritima.</title>
        <authorList>
            <person name="Nelson K.E."/>
            <person name="Clayton R.A."/>
            <person name="Gill S.R."/>
            <person name="Gwinn M.L."/>
            <person name="Dodson R.J."/>
            <person name="Haft D.H."/>
            <person name="Hickey E.K."/>
            <person name="Peterson J.D."/>
            <person name="Nelson W.C."/>
            <person name="Ketchum K.A."/>
            <person name="McDonald L.A."/>
            <person name="Utterback T.R."/>
            <person name="Malek J.A."/>
            <person name="Linher K.D."/>
            <person name="Garrett M.M."/>
            <person name="Stewart A.M."/>
            <person name="Cotton M.D."/>
            <person name="Pratt M.S."/>
            <person name="Phillips C.A."/>
            <person name="Richardson D.L."/>
            <person name="Heidelberg J.F."/>
            <person name="Sutton G.G."/>
            <person name="Fleischmann R.D."/>
            <person name="Eisen J.A."/>
            <person name="White O."/>
            <person name="Salzberg S.L."/>
            <person name="Smith H.O."/>
            <person name="Venter J.C."/>
            <person name="Fraser C.M."/>
        </authorList>
    </citation>
    <scope>NUCLEOTIDE SEQUENCE [LARGE SCALE GENOMIC DNA]</scope>
    <source>
        <strain>ATCC 43589 / DSM 3109 / JCM 10099 / NBRC 100826 / MSB8</strain>
    </source>
</reference>
<reference key="2">
    <citation type="journal article" date="2013" name="PLoS Genet.">
        <title>The genome organization of Thermotoga maritima reflects its lifestyle.</title>
        <authorList>
            <person name="Latif H."/>
            <person name="Lerman J.A."/>
            <person name="Portnoy V.A."/>
            <person name="Tarasova Y."/>
            <person name="Nagarajan H."/>
            <person name="Schrimpe-Rutledge A.C."/>
            <person name="Smith R.D."/>
            <person name="Adkins J.N."/>
            <person name="Lee D.H."/>
            <person name="Qiu Y."/>
            <person name="Zengler K."/>
        </authorList>
    </citation>
    <scope>NUCLEOTIDE SEQUENCE [LARGE SCALE GENOMIC DNA]</scope>
    <source>
        <strain>ATCC 43589 / DSM 3109 / JCM 10099 / NBRC 100826 / MSB8</strain>
    </source>
</reference>
<reference key="3">
    <citation type="journal article" date="2009" name="J. Bacteriol.">
        <title>A unique beta-1,2-mannosyltransferase of Thermotoga maritima that uses di-myo-inositol phosphate as the mannosyl acceptor.</title>
        <authorList>
            <person name="Rodrigues M.V."/>
            <person name="Borges N."/>
            <person name="Almeida C.P."/>
            <person name="Lamosa P."/>
            <person name="Santos H."/>
        </authorList>
    </citation>
    <scope>FUNCTION</scope>
    <scope>CATALYTIC ACTIVITY</scope>
    <scope>COFACTOR</scope>
    <scope>BIOPHYSICOCHEMICAL PROPERTIES</scope>
    <source>
        <strain>ATCC 43589 / DSM 3109 / JCM 10099 / NBRC 100826 / MSB8</strain>
    </source>
</reference>
<protein>
    <recommendedName>
        <fullName evidence="3">GDP-mannose:di-myo-inositol-1,3'-phosphate beta-1,2-mannosyltransferase</fullName>
        <ecNumber evidence="1">2.4.1.361</ecNumber>
    </recommendedName>
    <alternativeName>
        <fullName evidence="2">MDIP synthase</fullName>
    </alternativeName>
</protein>
<evidence type="ECO:0000269" key="1">
    <source>
    </source>
</evidence>
<evidence type="ECO:0000303" key="2">
    <source>
    </source>
</evidence>
<evidence type="ECO:0000305" key="3"/>
<evidence type="ECO:0000312" key="4">
    <source>
        <dbReference type="EMBL" id="AAD35446.1"/>
    </source>
</evidence>
<evidence type="ECO:0000312" key="5">
    <source>
        <dbReference type="EMBL" id="AGL49282.1"/>
    </source>
</evidence>
<dbReference type="EC" id="2.4.1.361" evidence="1"/>
<dbReference type="EMBL" id="AE000512">
    <property type="protein sequence ID" value="AAD35446.1"/>
    <property type="molecule type" value="Genomic_DNA"/>
</dbReference>
<dbReference type="EMBL" id="CP004077">
    <property type="protein sequence ID" value="AGL49282.1"/>
    <property type="molecule type" value="Genomic_DNA"/>
</dbReference>
<dbReference type="PIR" id="G72386">
    <property type="entry name" value="G72386"/>
</dbReference>
<dbReference type="RefSeq" id="NP_228170.1">
    <property type="nucleotide sequence ID" value="NC_000853.1"/>
</dbReference>
<dbReference type="RefSeq" id="WP_004083160.1">
    <property type="nucleotide sequence ID" value="NZ_CP011107.1"/>
</dbReference>
<dbReference type="SMR" id="Q9WYJ4"/>
<dbReference type="STRING" id="243274.TM_0359"/>
<dbReference type="PaxDb" id="243274-THEMA_02920"/>
<dbReference type="EnsemblBacteria" id="AAD35446">
    <property type="protein sequence ID" value="AAD35446"/>
    <property type="gene ID" value="TM_0359"/>
</dbReference>
<dbReference type="KEGG" id="tma:TM0359"/>
<dbReference type="KEGG" id="tmi:THEMA_02920"/>
<dbReference type="KEGG" id="tmm:Tmari_0357"/>
<dbReference type="KEGG" id="tmw:THMA_0367"/>
<dbReference type="PATRIC" id="fig|243274.17.peg.356"/>
<dbReference type="eggNOG" id="COG0438">
    <property type="taxonomic scope" value="Bacteria"/>
</dbReference>
<dbReference type="InParanoid" id="Q9WYJ4"/>
<dbReference type="OrthoDB" id="36573at2"/>
<dbReference type="BioCyc" id="MetaCyc:MONOMER-124303"/>
<dbReference type="BRENDA" id="2.4.1.361">
    <property type="organism ID" value="6331"/>
</dbReference>
<dbReference type="Proteomes" id="UP000008183">
    <property type="component" value="Chromosome"/>
</dbReference>
<dbReference type="GO" id="GO:0016757">
    <property type="term" value="F:glycosyltransferase activity"/>
    <property type="evidence" value="ECO:0007669"/>
    <property type="project" value="UniProtKB-KW"/>
</dbReference>
<dbReference type="CDD" id="cd03801">
    <property type="entry name" value="GT4_PimA-like"/>
    <property type="match status" value="1"/>
</dbReference>
<dbReference type="Gene3D" id="3.40.50.2000">
    <property type="entry name" value="Glycogen Phosphorylase B"/>
    <property type="match status" value="2"/>
</dbReference>
<dbReference type="InterPro" id="IPR028098">
    <property type="entry name" value="Glyco_trans_4-like_N"/>
</dbReference>
<dbReference type="PANTHER" id="PTHR12526">
    <property type="entry name" value="GLYCOSYLTRANSFERASE"/>
    <property type="match status" value="1"/>
</dbReference>
<dbReference type="Pfam" id="PF13439">
    <property type="entry name" value="Glyco_transf_4"/>
    <property type="match status" value="1"/>
</dbReference>
<dbReference type="SUPFAM" id="SSF53756">
    <property type="entry name" value="UDP-Glycosyltransferase/glycogen phosphorylase"/>
    <property type="match status" value="1"/>
</dbReference>
<sequence length="356" mass="41972">MKIGFLSRWGATCGVGMHAEILAREFIRMGHEVVVFAPTEESASKEVKYYKRTEAQDPEFVKREIYTEVDNVTEEGWVKEEEILKENLDLLIIETFWRVPVKPLTRLIEKLKIPVISVFHEANIFKAREVVKLPCDKIVVFDRRFYDEILEFYEIPREKVEVISYPVMKPYDAEPERPVSEDKFLFFSFGRQPVEEYCDFLNALKKLRKRFDNVHYWIIRSDGRVDYEAEWITQWQKRPTVEKLYSYLKGSNVHLLPKGNTPNVVVSSTLYQIIASETPIVIRDSRFVETIETDVYGFGPIVKYRNIHDLVHKLELLMLDRELVEDIKKEVRVFVEKYGGDKIAQEFLDLAKTITK</sequence>
<organism>
    <name type="scientific">Thermotoga maritima (strain ATCC 43589 / DSM 3109 / JCM 10099 / NBRC 100826 / MSB8)</name>
    <dbReference type="NCBI Taxonomy" id="243274"/>
    <lineage>
        <taxon>Bacteria</taxon>
        <taxon>Thermotogati</taxon>
        <taxon>Thermotogota</taxon>
        <taxon>Thermotogae</taxon>
        <taxon>Thermotogales</taxon>
        <taxon>Thermotogaceae</taxon>
        <taxon>Thermotoga</taxon>
    </lineage>
</organism>
<name>MDS_THEMA</name>
<feature type="chain" id="PRO_0000449821" description="GDP-mannose:di-myo-inositol-1,3'-phosphate beta-1,2-mannosyltransferase">
    <location>
        <begin position="1"/>
        <end position="356"/>
    </location>
</feature>
<accession>Q9WYJ4</accession>
<accession>G4FHS1</accession>
<accession>R4NYA7</accession>
<proteinExistence type="evidence at protein level"/>
<comment type="function">
    <text evidence="1">Catalyzes the transfer of the mannosyl group from GDP-mannose to di-myo-inositol-1,3'-phosphate (DIP), producing mannosyl-di-myo-inositol phosphate (MDIP). Can also use MDIP as an acceptor of a second mannose residue, yielding di-mannosyl-di-myo-inositol phosphate (MMDIP). Minor amounts of the tri-mannosylated form are also formed.</text>
</comment>
<comment type="catalytic activity">
    <reaction evidence="1">
        <text>bis(myo-inositol) 1,3'-phosphate + GDP-alpha-D-mannose = 2-O-(beta-D-mannosyl)-bis(myo-inositol) 1,3'-phosphate + GDP + H(+)</text>
        <dbReference type="Rhea" id="RHEA:59080"/>
        <dbReference type="ChEBI" id="CHEBI:15378"/>
        <dbReference type="ChEBI" id="CHEBI:57527"/>
        <dbReference type="ChEBI" id="CHEBI:58189"/>
        <dbReference type="ChEBI" id="CHEBI:142886"/>
        <dbReference type="ChEBI" id="CHEBI:142888"/>
    </reaction>
</comment>
<comment type="catalytic activity">
    <reaction evidence="1">
        <text>2-O-(beta-D-mannosyl)-bis(myo-inositol) 1,3'-phosphate + GDP-alpha-D-mannose = 2-O-(beta-D-mannosyl-(1-&gt;2)-beta-D-mannosyl)-bis(myo-inositol) 1,3'-phosphate + GDP + H(+)</text>
        <dbReference type="Rhea" id="RHEA:59084"/>
        <dbReference type="ChEBI" id="CHEBI:15378"/>
        <dbReference type="ChEBI" id="CHEBI:57527"/>
        <dbReference type="ChEBI" id="CHEBI:58189"/>
        <dbReference type="ChEBI" id="CHEBI:142887"/>
        <dbReference type="ChEBI" id="CHEBI:142888"/>
    </reaction>
</comment>
<comment type="catalytic activity">
    <reaction evidence="1">
        <text>bis(myo-inositol) 1,3'-phosphate + 2 GDP-alpha-D-mannose = 2-O-(beta-D-mannosyl-(1-&gt;2)-beta-D-mannosyl)-bis(myo-inositol) 1,3'-phosphate + 2 GDP + 2 H(+)</text>
        <dbReference type="Rhea" id="RHEA:59076"/>
        <dbReference type="ChEBI" id="CHEBI:15378"/>
        <dbReference type="ChEBI" id="CHEBI:57527"/>
        <dbReference type="ChEBI" id="CHEBI:58189"/>
        <dbReference type="ChEBI" id="CHEBI:142886"/>
        <dbReference type="ChEBI" id="CHEBI:142887"/>
        <dbReference type="EC" id="2.4.1.361"/>
    </reaction>
</comment>
<comment type="cofactor">
    <cofactor evidence="1">
        <name>Mg(2+)</name>
        <dbReference type="ChEBI" id="CHEBI:18420"/>
    </cofactor>
    <text evidence="1">Mg(2+) is required for maximal activity.</text>
</comment>
<comment type="biophysicochemical properties">
    <kinetics>
        <KM evidence="1">16 mM for DIP</KM>
        <KM evidence="1">0.7 mM for GDP-mannose</KM>
    </kinetics>
    <temperatureDependence>
        <text evidence="1">Optimum temperature is 95 degrees Celsius.</text>
    </temperatureDependence>
</comment>
<comment type="similarity">
    <text evidence="3">Belongs to the MDIP synthase family.</text>
</comment>
<keyword id="KW-0328">Glycosyltransferase</keyword>
<keyword id="KW-0460">Magnesium</keyword>
<keyword id="KW-1185">Reference proteome</keyword>
<keyword id="KW-0808">Transferase</keyword>
<gene>
    <name evidence="2" type="primary">mds</name>
    <name evidence="4" type="ordered locus">TM_0359</name>
    <name evidence="5" type="ORF">Tmari_0357</name>
</gene>